<dbReference type="EMBL" id="AF166114">
    <property type="protein sequence ID" value="AAF43807.1"/>
    <property type="molecule type" value="Genomic_DNA"/>
</dbReference>
<dbReference type="RefSeq" id="NP_038366.1">
    <property type="nucleotide sequence ID" value="NC_002186.1"/>
</dbReference>
<dbReference type="SMR" id="Q9MUU4"/>
<dbReference type="GeneID" id="800899"/>
<dbReference type="GO" id="GO:0009507">
    <property type="term" value="C:chloroplast"/>
    <property type="evidence" value="ECO:0007669"/>
    <property type="project" value="UniProtKB-SubCell"/>
</dbReference>
<dbReference type="GO" id="GO:0022625">
    <property type="term" value="C:cytosolic large ribosomal subunit"/>
    <property type="evidence" value="ECO:0007669"/>
    <property type="project" value="TreeGrafter"/>
</dbReference>
<dbReference type="GO" id="GO:0070180">
    <property type="term" value="F:large ribosomal subunit rRNA binding"/>
    <property type="evidence" value="ECO:0007669"/>
    <property type="project" value="TreeGrafter"/>
</dbReference>
<dbReference type="GO" id="GO:0003735">
    <property type="term" value="F:structural constituent of ribosome"/>
    <property type="evidence" value="ECO:0007669"/>
    <property type="project" value="InterPro"/>
</dbReference>
<dbReference type="GO" id="GO:0006412">
    <property type="term" value="P:translation"/>
    <property type="evidence" value="ECO:0007669"/>
    <property type="project" value="UniProtKB-UniRule"/>
</dbReference>
<dbReference type="CDD" id="cd00337">
    <property type="entry name" value="Ribosomal_uL14"/>
    <property type="match status" value="1"/>
</dbReference>
<dbReference type="FunFam" id="2.40.150.20:FF:000001">
    <property type="entry name" value="50S ribosomal protein L14"/>
    <property type="match status" value="1"/>
</dbReference>
<dbReference type="Gene3D" id="2.40.150.20">
    <property type="entry name" value="Ribosomal protein L14"/>
    <property type="match status" value="1"/>
</dbReference>
<dbReference type="HAMAP" id="MF_01367">
    <property type="entry name" value="Ribosomal_uL14"/>
    <property type="match status" value="1"/>
</dbReference>
<dbReference type="InterPro" id="IPR000218">
    <property type="entry name" value="Ribosomal_uL14"/>
</dbReference>
<dbReference type="InterPro" id="IPR005745">
    <property type="entry name" value="Ribosomal_uL14_bac-type"/>
</dbReference>
<dbReference type="InterPro" id="IPR019972">
    <property type="entry name" value="Ribosomal_uL14_CS"/>
</dbReference>
<dbReference type="InterPro" id="IPR036853">
    <property type="entry name" value="Ribosomal_uL14_sf"/>
</dbReference>
<dbReference type="NCBIfam" id="TIGR01067">
    <property type="entry name" value="rplN_bact"/>
    <property type="match status" value="1"/>
</dbReference>
<dbReference type="PANTHER" id="PTHR11761">
    <property type="entry name" value="50S/60S RIBOSOMAL PROTEIN L14/L23"/>
    <property type="match status" value="1"/>
</dbReference>
<dbReference type="PANTHER" id="PTHR11761:SF3">
    <property type="entry name" value="LARGE RIBOSOMAL SUBUNIT PROTEIN UL14M"/>
    <property type="match status" value="1"/>
</dbReference>
<dbReference type="Pfam" id="PF00238">
    <property type="entry name" value="Ribosomal_L14"/>
    <property type="match status" value="1"/>
</dbReference>
<dbReference type="SMART" id="SM01374">
    <property type="entry name" value="Ribosomal_L14"/>
    <property type="match status" value="1"/>
</dbReference>
<dbReference type="SUPFAM" id="SSF50193">
    <property type="entry name" value="Ribosomal protein L14"/>
    <property type="match status" value="1"/>
</dbReference>
<dbReference type="PROSITE" id="PS00049">
    <property type="entry name" value="RIBOSOMAL_L14"/>
    <property type="match status" value="1"/>
</dbReference>
<feature type="chain" id="PRO_0000128592" description="Large ribosomal subunit protein uL14c">
    <location>
        <begin position="1"/>
        <end position="122"/>
    </location>
</feature>
<evidence type="ECO:0000255" key="1">
    <source>
        <dbReference type="HAMAP-Rule" id="MF_01367"/>
    </source>
</evidence>
<evidence type="ECO:0000305" key="2"/>
<keyword id="KW-0150">Chloroplast</keyword>
<keyword id="KW-0934">Plastid</keyword>
<keyword id="KW-0687">Ribonucleoprotein</keyword>
<keyword id="KW-0689">Ribosomal protein</keyword>
<keyword id="KW-0694">RNA-binding</keyword>
<keyword id="KW-0699">rRNA-binding</keyword>
<comment type="function">
    <text evidence="1">Binds to 23S rRNA.</text>
</comment>
<comment type="subunit">
    <text evidence="1">Part of the 50S ribosomal subunit.</text>
</comment>
<comment type="subcellular location">
    <subcellularLocation>
        <location>Plastid</location>
        <location>Chloroplast</location>
    </subcellularLocation>
</comment>
<comment type="similarity">
    <text evidence="1">Belongs to the universal ribosomal protein uL14 family.</text>
</comment>
<gene>
    <name evidence="1" type="primary">rpl14</name>
</gene>
<organism>
    <name type="scientific">Mesostigma viride</name>
    <name type="common">Green alga</name>
    <dbReference type="NCBI Taxonomy" id="41882"/>
    <lineage>
        <taxon>Eukaryota</taxon>
        <taxon>Viridiplantae</taxon>
        <taxon>Streptophyta</taxon>
        <taxon>Mesostigmatophyceae</taxon>
        <taxon>Mesostigmatales</taxon>
        <taxon>Mesostigmataceae</taxon>
        <taxon>Mesostigma</taxon>
    </lineage>
</organism>
<geneLocation type="chloroplast"/>
<sequence>MIQAQSYLNVADNSGAKKIMCIRVLGGSQRKYAAIGDVIIGVVKDSVPNMSLKKSEVVRAVVVRTCKGIRRENGMTIRFDDNAAVVINKDGNPKGTRVFGPVARELRDRNFTKIVSLAPEVL</sequence>
<protein>
    <recommendedName>
        <fullName evidence="1">Large ribosomal subunit protein uL14c</fullName>
    </recommendedName>
    <alternativeName>
        <fullName evidence="2">50S ribosomal protein L14, chloroplastic</fullName>
    </alternativeName>
</protein>
<accession>Q9MUU4</accession>
<name>RK14_MESVI</name>
<proteinExistence type="inferred from homology"/>
<reference key="1">
    <citation type="journal article" date="2000" name="Nature">
        <title>Ancestral chloroplast genome in Mesostigma viride reveals an early branch of green plant evolution.</title>
        <authorList>
            <person name="Lemieux C."/>
            <person name="Otis C."/>
            <person name="Turmel M."/>
        </authorList>
    </citation>
    <scope>NUCLEOTIDE SEQUENCE [LARGE SCALE GENOMIC DNA]</scope>
    <source>
        <strain>NIES-296 / KY-14 / CCMP 2046</strain>
    </source>
</reference>